<name>BOR4_ARATH</name>
<keyword id="KW-0039">Anion exchange</keyword>
<keyword id="KW-0406">Ion transport</keyword>
<keyword id="KW-0472">Membrane</keyword>
<keyword id="KW-1185">Reference proteome</keyword>
<keyword id="KW-0812">Transmembrane</keyword>
<keyword id="KW-1133">Transmembrane helix</keyword>
<keyword id="KW-0813">Transport</keyword>
<accession>Q9XI23</accession>
<comment type="function">
    <text evidence="3">Efflux-type boron transporter polarly localized in roots. Boron is essential for maintaining the integrity of plants cell walls.</text>
</comment>
<comment type="subcellular location">
    <subcellularLocation>
        <location evidence="3">Membrane</location>
        <topology evidence="3">Multi-pass membrane protein</topology>
    </subcellularLocation>
</comment>
<comment type="tissue specificity">
    <text evidence="3">Expressed in the distal sides of epidermal cells in the elongation zone of roots.</text>
</comment>
<comment type="induction">
    <text evidence="3">Up-regulated by boron supply.</text>
</comment>
<comment type="similarity">
    <text evidence="4">Belongs to the anion exchanger (TC 2.A.31.3) family.</text>
</comment>
<protein>
    <recommendedName>
        <fullName>Boron transporter 4</fullName>
    </recommendedName>
</protein>
<sequence>MEEERVDSSKRLFRGIVADLRGRALCYKEDWVAGLRSGFGILAPTTYIFFASALPVIAFGEQLSRDTEGALSTVETLASTALCGVIHSILGGQPLLILGVAEPTVLMYVYLYNFAIGRPELGKQLYLAWAAWVCVWTALLLFVMAILNTADIINRFTRVAGELFGMLISVLFIQQAIKGMVSEFGMPKDEDSKLEKYKFEWLYTNGLLGLIFTFGLLYTALKSRKARSWRYGTGWYRSFIADYGVPLMVVVWTALSFSTPSKLPSGVPRRLFSPLPWDSPSLSHWTVIKDMGKVSPGYIFAAFIPALMIAGLYFFDHSVASQLAQQKEFNLKKPSAYHYDILLLGFMTLICGLLGLPPSNGVLPQSPMHTKSLAVLKRQLIRRKMVKTAKESIRKRETSSQVYENMQEVFIEMDKSPLAQTDPSVIIELQDLKEAVMKSNDEEREGDEESGFDPEKHLDAYLPVRVNEQRVSNLLQSLLVAGAVLAMPAIKLIPTSILWGYFAYMAIDSLPGNQFFERLTLLFVPTSRRFKVLEGAHASFVEKVPYKSMAAFTLLQIFYFGLCYGVTWIPVAGIMFPVPFFLLIAIRQYILPKLFNPAHLRELDAAEYEEIPGTPRNPLELSFRSNDSKRGVQEGDAEILDELTTSRGELKVRTLNLNEDKGNQIYPKEKVKAGDGDMSTTRE</sequence>
<gene>
    <name type="primary">BOR4</name>
    <name type="ordered locus">At1g15460</name>
    <name type="ORF">F9L1.41</name>
</gene>
<feature type="chain" id="PRO_0000079240" description="Boron transporter 4">
    <location>
        <begin position="1"/>
        <end position="683"/>
    </location>
</feature>
<feature type="topological domain" description="Cytoplasmic" evidence="1">
    <location>
        <begin position="1"/>
        <end position="38"/>
    </location>
</feature>
<feature type="transmembrane region" description="Helical" evidence="1">
    <location>
        <begin position="39"/>
        <end position="59"/>
    </location>
</feature>
<feature type="topological domain" description="Extracellular" evidence="1">
    <location>
        <begin position="60"/>
        <end position="80"/>
    </location>
</feature>
<feature type="transmembrane region" description="Helical" evidence="1">
    <location>
        <begin position="81"/>
        <end position="101"/>
    </location>
</feature>
<feature type="topological domain" description="Cytoplasmic" evidence="1">
    <location>
        <begin position="102"/>
        <end position="126"/>
    </location>
</feature>
<feature type="transmembrane region" description="Helical" evidence="1">
    <location>
        <begin position="127"/>
        <end position="147"/>
    </location>
</feature>
<feature type="topological domain" description="Extracellular" evidence="1">
    <location>
        <begin position="148"/>
        <end position="160"/>
    </location>
</feature>
<feature type="transmembrane region" description="Helical" evidence="1">
    <location>
        <begin position="161"/>
        <end position="181"/>
    </location>
</feature>
<feature type="topological domain" description="Cytoplasmic" evidence="1">
    <location>
        <begin position="182"/>
        <end position="200"/>
    </location>
</feature>
<feature type="transmembrane region" description="Helical" evidence="1">
    <location>
        <begin position="201"/>
        <end position="221"/>
    </location>
</feature>
<feature type="topological domain" description="Extracellular" evidence="1">
    <location>
        <begin position="222"/>
        <end position="238"/>
    </location>
</feature>
<feature type="transmembrane region" description="Helical" evidence="1">
    <location>
        <begin position="239"/>
        <end position="259"/>
    </location>
</feature>
<feature type="topological domain" description="Cytoplasmic" evidence="1">
    <location>
        <begin position="260"/>
        <end position="294"/>
    </location>
</feature>
<feature type="transmembrane region" description="Helical" evidence="1">
    <location>
        <begin position="295"/>
        <end position="315"/>
    </location>
</feature>
<feature type="topological domain" description="Extracellular" evidence="1">
    <location>
        <begin position="316"/>
        <end position="335"/>
    </location>
</feature>
<feature type="transmembrane region" description="Helical" evidence="1">
    <location>
        <begin position="336"/>
        <end position="356"/>
    </location>
</feature>
<feature type="topological domain" description="Cytoplasmic" evidence="1">
    <location>
        <begin position="357"/>
        <end position="477"/>
    </location>
</feature>
<feature type="transmembrane region" description="Helical" evidence="1">
    <location>
        <begin position="478"/>
        <end position="498"/>
    </location>
</feature>
<feature type="topological domain" description="Extracellular" evidence="1">
    <location>
        <begin position="499"/>
        <end position="565"/>
    </location>
</feature>
<feature type="transmembrane region" description="Helical" evidence="1">
    <location>
        <begin position="566"/>
        <end position="586"/>
    </location>
</feature>
<feature type="topological domain" description="Cytoplasmic" evidence="1">
    <location>
        <begin position="587"/>
        <end position="683"/>
    </location>
</feature>
<feature type="region of interest" description="Disordered" evidence="2">
    <location>
        <begin position="617"/>
        <end position="638"/>
    </location>
</feature>
<feature type="region of interest" description="Disordered" evidence="2">
    <location>
        <begin position="661"/>
        <end position="683"/>
    </location>
</feature>
<proteinExistence type="evidence at transcript level"/>
<reference key="1">
    <citation type="journal article" date="2000" name="Nature">
        <title>Sequence and analysis of chromosome 1 of the plant Arabidopsis thaliana.</title>
        <authorList>
            <person name="Theologis A."/>
            <person name="Ecker J.R."/>
            <person name="Palm C.J."/>
            <person name="Federspiel N.A."/>
            <person name="Kaul S."/>
            <person name="White O."/>
            <person name="Alonso J."/>
            <person name="Altafi H."/>
            <person name="Araujo R."/>
            <person name="Bowman C.L."/>
            <person name="Brooks S.Y."/>
            <person name="Buehler E."/>
            <person name="Chan A."/>
            <person name="Chao Q."/>
            <person name="Chen H."/>
            <person name="Cheuk R.F."/>
            <person name="Chin C.W."/>
            <person name="Chung M.K."/>
            <person name="Conn L."/>
            <person name="Conway A.B."/>
            <person name="Conway A.R."/>
            <person name="Creasy T.H."/>
            <person name="Dewar K."/>
            <person name="Dunn P."/>
            <person name="Etgu P."/>
            <person name="Feldblyum T.V."/>
            <person name="Feng J.-D."/>
            <person name="Fong B."/>
            <person name="Fujii C.Y."/>
            <person name="Gill J.E."/>
            <person name="Goldsmith A.D."/>
            <person name="Haas B."/>
            <person name="Hansen N.F."/>
            <person name="Hughes B."/>
            <person name="Huizar L."/>
            <person name="Hunter J.L."/>
            <person name="Jenkins J."/>
            <person name="Johnson-Hopson C."/>
            <person name="Khan S."/>
            <person name="Khaykin E."/>
            <person name="Kim C.J."/>
            <person name="Koo H.L."/>
            <person name="Kremenetskaia I."/>
            <person name="Kurtz D.B."/>
            <person name="Kwan A."/>
            <person name="Lam B."/>
            <person name="Langin-Hooper S."/>
            <person name="Lee A."/>
            <person name="Lee J.M."/>
            <person name="Lenz C.A."/>
            <person name="Li J.H."/>
            <person name="Li Y.-P."/>
            <person name="Lin X."/>
            <person name="Liu S.X."/>
            <person name="Liu Z.A."/>
            <person name="Luros J.S."/>
            <person name="Maiti R."/>
            <person name="Marziali A."/>
            <person name="Militscher J."/>
            <person name="Miranda M."/>
            <person name="Nguyen M."/>
            <person name="Nierman W.C."/>
            <person name="Osborne B.I."/>
            <person name="Pai G."/>
            <person name="Peterson J."/>
            <person name="Pham P.K."/>
            <person name="Rizzo M."/>
            <person name="Rooney T."/>
            <person name="Rowley D."/>
            <person name="Sakano H."/>
            <person name="Salzberg S.L."/>
            <person name="Schwartz J.R."/>
            <person name="Shinn P."/>
            <person name="Southwick A.M."/>
            <person name="Sun H."/>
            <person name="Tallon L.J."/>
            <person name="Tambunga G."/>
            <person name="Toriumi M.J."/>
            <person name="Town C.D."/>
            <person name="Utterback T."/>
            <person name="Van Aken S."/>
            <person name="Vaysberg M."/>
            <person name="Vysotskaia V.S."/>
            <person name="Walker M."/>
            <person name="Wu D."/>
            <person name="Yu G."/>
            <person name="Fraser C.M."/>
            <person name="Venter J.C."/>
            <person name="Davis R.W."/>
        </authorList>
    </citation>
    <scope>NUCLEOTIDE SEQUENCE [LARGE SCALE GENOMIC DNA]</scope>
    <source>
        <strain>cv. Columbia</strain>
    </source>
</reference>
<reference key="2">
    <citation type="journal article" date="2017" name="Plant J.">
        <title>Araport11: a complete reannotation of the Arabidopsis thaliana reference genome.</title>
        <authorList>
            <person name="Cheng C.Y."/>
            <person name="Krishnakumar V."/>
            <person name="Chan A.P."/>
            <person name="Thibaud-Nissen F."/>
            <person name="Schobel S."/>
            <person name="Town C.D."/>
        </authorList>
    </citation>
    <scope>GENOME REANNOTATION</scope>
    <source>
        <strain>cv. Columbia</strain>
    </source>
</reference>
<reference key="3">
    <citation type="journal article" date="2003" name="Science">
        <title>Empirical analysis of transcriptional activity in the Arabidopsis genome.</title>
        <authorList>
            <person name="Yamada K."/>
            <person name="Lim J."/>
            <person name="Dale J.M."/>
            <person name="Chen H."/>
            <person name="Shinn P."/>
            <person name="Palm C.J."/>
            <person name="Southwick A.M."/>
            <person name="Wu H.C."/>
            <person name="Kim C.J."/>
            <person name="Nguyen M."/>
            <person name="Pham P.K."/>
            <person name="Cheuk R.F."/>
            <person name="Karlin-Newmann G."/>
            <person name="Liu S.X."/>
            <person name="Lam B."/>
            <person name="Sakano H."/>
            <person name="Wu T."/>
            <person name="Yu G."/>
            <person name="Miranda M."/>
            <person name="Quach H.L."/>
            <person name="Tripp M."/>
            <person name="Chang C.H."/>
            <person name="Lee J.M."/>
            <person name="Toriumi M.J."/>
            <person name="Chan M.M."/>
            <person name="Tang C.C."/>
            <person name="Onodera C.S."/>
            <person name="Deng J.M."/>
            <person name="Akiyama K."/>
            <person name="Ansari Y."/>
            <person name="Arakawa T."/>
            <person name="Banh J."/>
            <person name="Banno F."/>
            <person name="Bowser L."/>
            <person name="Brooks S.Y."/>
            <person name="Carninci P."/>
            <person name="Chao Q."/>
            <person name="Choy N."/>
            <person name="Enju A."/>
            <person name="Goldsmith A.D."/>
            <person name="Gurjal M."/>
            <person name="Hansen N.F."/>
            <person name="Hayashizaki Y."/>
            <person name="Johnson-Hopson C."/>
            <person name="Hsuan V.W."/>
            <person name="Iida K."/>
            <person name="Karnes M."/>
            <person name="Khan S."/>
            <person name="Koesema E."/>
            <person name="Ishida J."/>
            <person name="Jiang P.X."/>
            <person name="Jones T."/>
            <person name="Kawai J."/>
            <person name="Kamiya A."/>
            <person name="Meyers C."/>
            <person name="Nakajima M."/>
            <person name="Narusaka M."/>
            <person name="Seki M."/>
            <person name="Sakurai T."/>
            <person name="Satou M."/>
            <person name="Tamse R."/>
            <person name="Vaysberg M."/>
            <person name="Wallender E.K."/>
            <person name="Wong C."/>
            <person name="Yamamura Y."/>
            <person name="Yuan S."/>
            <person name="Shinozaki K."/>
            <person name="Davis R.W."/>
            <person name="Theologis A."/>
            <person name="Ecker J.R."/>
        </authorList>
    </citation>
    <scope>NUCLEOTIDE SEQUENCE [LARGE SCALE MRNA]</scope>
    <source>
        <strain>cv. Columbia</strain>
    </source>
</reference>
<reference key="4">
    <citation type="journal article" date="2007" name="Science">
        <title>Plants tolerant of high boron levels.</title>
        <authorList>
            <person name="Miwa K."/>
            <person name="Takano J."/>
            <person name="Omori H."/>
            <person name="Seki M."/>
            <person name="Shinozaki K."/>
            <person name="Fujiwara T."/>
        </authorList>
    </citation>
    <scope>FUNCTION</scope>
    <scope>SUBCELLULAR LOCATION</scope>
    <scope>TISSUE SPECIFICITY</scope>
    <scope>INDUCTION</scope>
</reference>
<evidence type="ECO:0000255" key="1"/>
<evidence type="ECO:0000256" key="2">
    <source>
        <dbReference type="SAM" id="MobiDB-lite"/>
    </source>
</evidence>
<evidence type="ECO:0000269" key="3">
    <source>
    </source>
</evidence>
<evidence type="ECO:0000305" key="4"/>
<organism>
    <name type="scientific">Arabidopsis thaliana</name>
    <name type="common">Mouse-ear cress</name>
    <dbReference type="NCBI Taxonomy" id="3702"/>
    <lineage>
        <taxon>Eukaryota</taxon>
        <taxon>Viridiplantae</taxon>
        <taxon>Streptophyta</taxon>
        <taxon>Embryophyta</taxon>
        <taxon>Tracheophyta</taxon>
        <taxon>Spermatophyta</taxon>
        <taxon>Magnoliopsida</taxon>
        <taxon>eudicotyledons</taxon>
        <taxon>Gunneridae</taxon>
        <taxon>Pentapetalae</taxon>
        <taxon>rosids</taxon>
        <taxon>malvids</taxon>
        <taxon>Brassicales</taxon>
        <taxon>Brassicaceae</taxon>
        <taxon>Camelineae</taxon>
        <taxon>Arabidopsis</taxon>
    </lineage>
</organism>
<dbReference type="EMBL" id="AC007591">
    <property type="protein sequence ID" value="AAD39673.1"/>
    <property type="molecule type" value="Genomic_DNA"/>
</dbReference>
<dbReference type="EMBL" id="CP002684">
    <property type="protein sequence ID" value="AEE29326.1"/>
    <property type="molecule type" value="Genomic_DNA"/>
</dbReference>
<dbReference type="EMBL" id="CP002684">
    <property type="protein sequence ID" value="ANM60142.1"/>
    <property type="molecule type" value="Genomic_DNA"/>
</dbReference>
<dbReference type="EMBL" id="AY069887">
    <property type="protein sequence ID" value="AAL47440.1"/>
    <property type="molecule type" value="mRNA"/>
</dbReference>
<dbReference type="RefSeq" id="NP_001319010.1">
    <property type="nucleotide sequence ID" value="NM_001332166.1"/>
</dbReference>
<dbReference type="RefSeq" id="NP_172999.1">
    <property type="nucleotide sequence ID" value="NM_101415.4"/>
</dbReference>
<dbReference type="SMR" id="Q9XI23"/>
<dbReference type="FunCoup" id="Q9XI23">
    <property type="interactions" value="570"/>
</dbReference>
<dbReference type="STRING" id="3702.Q9XI23"/>
<dbReference type="iPTMnet" id="Q9XI23"/>
<dbReference type="PaxDb" id="3702-AT1G15460.1"/>
<dbReference type="ProteomicsDB" id="240630"/>
<dbReference type="EnsemblPlants" id="AT1G15460.1">
    <property type="protein sequence ID" value="AT1G15460.1"/>
    <property type="gene ID" value="AT1G15460"/>
</dbReference>
<dbReference type="EnsemblPlants" id="AT1G15460.2">
    <property type="protein sequence ID" value="AT1G15460.2"/>
    <property type="gene ID" value="AT1G15460"/>
</dbReference>
<dbReference type="GeneID" id="838116"/>
<dbReference type="Gramene" id="AT1G15460.1">
    <property type="protein sequence ID" value="AT1G15460.1"/>
    <property type="gene ID" value="AT1G15460"/>
</dbReference>
<dbReference type="Gramene" id="AT1G15460.2">
    <property type="protein sequence ID" value="AT1G15460.2"/>
    <property type="gene ID" value="AT1G15460"/>
</dbReference>
<dbReference type="KEGG" id="ath:AT1G15460"/>
<dbReference type="Araport" id="AT1G15460"/>
<dbReference type="TAIR" id="AT1G15460">
    <property type="gene designation" value="BOR4"/>
</dbReference>
<dbReference type="eggNOG" id="KOG1172">
    <property type="taxonomic scope" value="Eukaryota"/>
</dbReference>
<dbReference type="HOGENOM" id="CLU_002289_3_2_1"/>
<dbReference type="InParanoid" id="Q9XI23"/>
<dbReference type="OMA" id="SESVYHW"/>
<dbReference type="PhylomeDB" id="Q9XI23"/>
<dbReference type="PRO" id="PR:Q9XI23"/>
<dbReference type="Proteomes" id="UP000006548">
    <property type="component" value="Chromosome 1"/>
</dbReference>
<dbReference type="ExpressionAtlas" id="Q9XI23">
    <property type="expression patterns" value="baseline and differential"/>
</dbReference>
<dbReference type="GO" id="GO:0005886">
    <property type="term" value="C:plasma membrane"/>
    <property type="evidence" value="ECO:0000314"/>
    <property type="project" value="UniProtKB"/>
</dbReference>
<dbReference type="GO" id="GO:0080139">
    <property type="term" value="F:borate efflux transmembrane transporter activity"/>
    <property type="evidence" value="ECO:0000315"/>
    <property type="project" value="TAIR"/>
</dbReference>
<dbReference type="GO" id="GO:0005452">
    <property type="term" value="F:solute:inorganic anion antiporter activity"/>
    <property type="evidence" value="ECO:0007669"/>
    <property type="project" value="InterPro"/>
</dbReference>
<dbReference type="GO" id="GO:0046713">
    <property type="term" value="P:borate transport"/>
    <property type="evidence" value="ECO:0000315"/>
    <property type="project" value="TAIR"/>
</dbReference>
<dbReference type="GO" id="GO:0080029">
    <property type="term" value="P:cellular response to boron-containing substance levels"/>
    <property type="evidence" value="ECO:0000314"/>
    <property type="project" value="UniProtKB"/>
</dbReference>
<dbReference type="GO" id="GO:0006820">
    <property type="term" value="P:monoatomic anion transport"/>
    <property type="evidence" value="ECO:0007669"/>
    <property type="project" value="InterPro"/>
</dbReference>
<dbReference type="FunFam" id="1.10.287.570:FF:000004">
    <property type="entry name" value="probable boron transporter 2"/>
    <property type="match status" value="1"/>
</dbReference>
<dbReference type="Gene3D" id="1.10.287.570">
    <property type="entry name" value="Helical hairpin bin"/>
    <property type="match status" value="1"/>
</dbReference>
<dbReference type="InterPro" id="IPR011531">
    <property type="entry name" value="HCO3_transpt-like_TM_dom"/>
</dbReference>
<dbReference type="InterPro" id="IPR003020">
    <property type="entry name" value="HCO3_transpt_euk"/>
</dbReference>
<dbReference type="PANTHER" id="PTHR11453">
    <property type="entry name" value="ANION EXCHANGE PROTEIN"/>
    <property type="match status" value="1"/>
</dbReference>
<dbReference type="PANTHER" id="PTHR11453:SF40">
    <property type="entry name" value="BORON TRANSPORTER 4-RELATED"/>
    <property type="match status" value="1"/>
</dbReference>
<dbReference type="Pfam" id="PF00955">
    <property type="entry name" value="HCO3_cotransp"/>
    <property type="match status" value="3"/>
</dbReference>